<dbReference type="EC" id="3.6.1.7"/>
<dbReference type="EMBL" id="BA000019">
    <property type="protein sequence ID" value="BAB72834.1"/>
    <property type="molecule type" value="Genomic_DNA"/>
</dbReference>
<dbReference type="PIR" id="AB1916">
    <property type="entry name" value="AB1916"/>
</dbReference>
<dbReference type="RefSeq" id="WP_010995051.1">
    <property type="nucleotide sequence ID" value="NZ_RSCN01000006.1"/>
</dbReference>
<dbReference type="SMR" id="Q8YYH3"/>
<dbReference type="STRING" id="103690.gene:10492890"/>
<dbReference type="KEGG" id="ana:alr0877"/>
<dbReference type="eggNOG" id="COG1254">
    <property type="taxonomic scope" value="Bacteria"/>
</dbReference>
<dbReference type="OrthoDB" id="9808093at2"/>
<dbReference type="Proteomes" id="UP000002483">
    <property type="component" value="Chromosome"/>
</dbReference>
<dbReference type="GO" id="GO:0003998">
    <property type="term" value="F:acylphosphatase activity"/>
    <property type="evidence" value="ECO:0007669"/>
    <property type="project" value="UniProtKB-EC"/>
</dbReference>
<dbReference type="Gene3D" id="3.30.70.100">
    <property type="match status" value="1"/>
</dbReference>
<dbReference type="InterPro" id="IPR020456">
    <property type="entry name" value="Acylphosphatase"/>
</dbReference>
<dbReference type="InterPro" id="IPR001792">
    <property type="entry name" value="Acylphosphatase-like_dom"/>
</dbReference>
<dbReference type="InterPro" id="IPR036046">
    <property type="entry name" value="Acylphosphatase-like_dom_sf"/>
</dbReference>
<dbReference type="InterPro" id="IPR017968">
    <property type="entry name" value="Acylphosphatase_CS"/>
</dbReference>
<dbReference type="NCBIfam" id="NF011013">
    <property type="entry name" value="PRK14441.1"/>
    <property type="match status" value="1"/>
</dbReference>
<dbReference type="NCBIfam" id="NF011016">
    <property type="entry name" value="PRK14444.1"/>
    <property type="match status" value="1"/>
</dbReference>
<dbReference type="PANTHER" id="PTHR47268">
    <property type="entry name" value="ACYLPHOSPHATASE"/>
    <property type="match status" value="1"/>
</dbReference>
<dbReference type="PANTHER" id="PTHR47268:SF4">
    <property type="entry name" value="ACYLPHOSPHATASE"/>
    <property type="match status" value="1"/>
</dbReference>
<dbReference type="Pfam" id="PF00708">
    <property type="entry name" value="Acylphosphatase"/>
    <property type="match status" value="1"/>
</dbReference>
<dbReference type="PRINTS" id="PR00112">
    <property type="entry name" value="ACYLPHPHTASE"/>
</dbReference>
<dbReference type="SUPFAM" id="SSF54975">
    <property type="entry name" value="Acylphosphatase/BLUF domain-like"/>
    <property type="match status" value="1"/>
</dbReference>
<dbReference type="PROSITE" id="PS00150">
    <property type="entry name" value="ACYLPHOSPHATASE_1"/>
    <property type="match status" value="1"/>
</dbReference>
<dbReference type="PROSITE" id="PS00151">
    <property type="entry name" value="ACYLPHOSPHATASE_2"/>
    <property type="match status" value="1"/>
</dbReference>
<dbReference type="PROSITE" id="PS51160">
    <property type="entry name" value="ACYLPHOSPHATASE_3"/>
    <property type="match status" value="1"/>
</dbReference>
<keyword id="KW-0378">Hydrolase</keyword>
<keyword id="KW-1185">Reference proteome</keyword>
<proteinExistence type="inferred from homology"/>
<sequence>MPNSTPQSQLIRAHVFVTGRVQGVGFRYSTVDTASQLGLTGWVRNLPDGRVEAVFEGVRDIVEDMVRWCHAGPPAAVVQDVAVEYEEPEGLRGFEVKRLVK</sequence>
<protein>
    <recommendedName>
        <fullName>Acylphosphatase</fullName>
        <ecNumber>3.6.1.7</ecNumber>
    </recommendedName>
    <alternativeName>
        <fullName>Acylphosphate phosphohydrolase</fullName>
    </alternativeName>
</protein>
<accession>Q8YYH3</accession>
<feature type="chain" id="PRO_0000326648" description="Acylphosphatase">
    <location>
        <begin position="1"/>
        <end position="101"/>
    </location>
</feature>
<feature type="domain" description="Acylphosphatase-like" evidence="1">
    <location>
        <begin position="12"/>
        <end position="98"/>
    </location>
</feature>
<feature type="active site" evidence="1">
    <location>
        <position position="27"/>
    </location>
</feature>
<feature type="active site" evidence="1">
    <location>
        <position position="45"/>
    </location>
</feature>
<comment type="catalytic activity">
    <reaction>
        <text>an acyl phosphate + H2O = a carboxylate + phosphate + H(+)</text>
        <dbReference type="Rhea" id="RHEA:14965"/>
        <dbReference type="ChEBI" id="CHEBI:15377"/>
        <dbReference type="ChEBI" id="CHEBI:15378"/>
        <dbReference type="ChEBI" id="CHEBI:29067"/>
        <dbReference type="ChEBI" id="CHEBI:43474"/>
        <dbReference type="ChEBI" id="CHEBI:59918"/>
        <dbReference type="EC" id="3.6.1.7"/>
    </reaction>
</comment>
<comment type="similarity">
    <text evidence="2">Belongs to the acylphosphatase family.</text>
</comment>
<reference key="1">
    <citation type="journal article" date="2001" name="DNA Res.">
        <title>Complete genomic sequence of the filamentous nitrogen-fixing cyanobacterium Anabaena sp. strain PCC 7120.</title>
        <authorList>
            <person name="Kaneko T."/>
            <person name="Nakamura Y."/>
            <person name="Wolk C.P."/>
            <person name="Kuritz T."/>
            <person name="Sasamoto S."/>
            <person name="Watanabe A."/>
            <person name="Iriguchi M."/>
            <person name="Ishikawa A."/>
            <person name="Kawashima K."/>
            <person name="Kimura T."/>
            <person name="Kishida Y."/>
            <person name="Kohara M."/>
            <person name="Matsumoto M."/>
            <person name="Matsuno A."/>
            <person name="Muraki A."/>
            <person name="Nakazaki N."/>
            <person name="Shimpo S."/>
            <person name="Sugimoto M."/>
            <person name="Takazawa M."/>
            <person name="Yamada M."/>
            <person name="Yasuda M."/>
            <person name="Tabata S."/>
        </authorList>
    </citation>
    <scope>NUCLEOTIDE SEQUENCE [LARGE SCALE GENOMIC DNA]</scope>
    <source>
        <strain>PCC 7120 / SAG 25.82 / UTEX 2576</strain>
    </source>
</reference>
<gene>
    <name type="primary">acyP</name>
    <name type="ordered locus">alr0877</name>
</gene>
<organism>
    <name type="scientific">Nostoc sp. (strain PCC 7120 / SAG 25.82 / UTEX 2576)</name>
    <dbReference type="NCBI Taxonomy" id="103690"/>
    <lineage>
        <taxon>Bacteria</taxon>
        <taxon>Bacillati</taxon>
        <taxon>Cyanobacteriota</taxon>
        <taxon>Cyanophyceae</taxon>
        <taxon>Nostocales</taxon>
        <taxon>Nostocaceae</taxon>
        <taxon>Nostoc</taxon>
    </lineage>
</organism>
<evidence type="ECO:0000255" key="1">
    <source>
        <dbReference type="PROSITE-ProRule" id="PRU00520"/>
    </source>
</evidence>
<evidence type="ECO:0000305" key="2"/>
<name>ACYP_NOSS1</name>